<gene>
    <name type="primary">FBX9</name>
    <name type="ordered locus">At2g04920</name>
    <name type="ORF">F1O13.5</name>
</gene>
<organism>
    <name type="scientific">Arabidopsis thaliana</name>
    <name type="common">Mouse-ear cress</name>
    <dbReference type="NCBI Taxonomy" id="3702"/>
    <lineage>
        <taxon>Eukaryota</taxon>
        <taxon>Viridiplantae</taxon>
        <taxon>Streptophyta</taxon>
        <taxon>Embryophyta</taxon>
        <taxon>Tracheophyta</taxon>
        <taxon>Spermatophyta</taxon>
        <taxon>Magnoliopsida</taxon>
        <taxon>eudicotyledons</taxon>
        <taxon>Gunneridae</taxon>
        <taxon>Pentapetalae</taxon>
        <taxon>rosids</taxon>
        <taxon>malvids</taxon>
        <taxon>Brassicales</taxon>
        <taxon>Brassicaceae</taxon>
        <taxon>Camelineae</taxon>
        <taxon>Arabidopsis</taxon>
    </lineage>
</organism>
<protein>
    <recommendedName>
        <fullName>Putative F-box only protein 9</fullName>
    </recommendedName>
</protein>
<feature type="chain" id="PRO_0000273542" description="Putative F-box only protein 9">
    <location>
        <begin position="1"/>
        <end position="376"/>
    </location>
</feature>
<feature type="domain" description="F-box" evidence="1">
    <location>
        <begin position="1"/>
        <end position="44"/>
    </location>
</feature>
<proteinExistence type="predicted"/>
<dbReference type="EMBL" id="AC006955">
    <property type="protein sequence ID" value="AAM15340.1"/>
    <property type="molecule type" value="Genomic_DNA"/>
</dbReference>
<dbReference type="EMBL" id="AC007211">
    <property type="protein sequence ID" value="AAD25583.1"/>
    <property type="molecule type" value="Genomic_DNA"/>
</dbReference>
<dbReference type="EMBL" id="CP002685">
    <property type="protein sequence ID" value="AEC05887.1"/>
    <property type="molecule type" value="Genomic_DNA"/>
</dbReference>
<dbReference type="PIR" id="B84463">
    <property type="entry name" value="B84463"/>
</dbReference>
<dbReference type="RefSeq" id="NP_565318.1">
    <property type="nucleotide sequence ID" value="NM_126524.1"/>
</dbReference>
<dbReference type="FunCoup" id="Q9SI34">
    <property type="interactions" value="19"/>
</dbReference>
<dbReference type="STRING" id="3702.Q9SI34"/>
<dbReference type="PaxDb" id="3702-AT2G04920.1"/>
<dbReference type="EnsemblPlants" id="AT2G04920.1">
    <property type="protein sequence ID" value="AT2G04920.1"/>
    <property type="gene ID" value="AT2G04920"/>
</dbReference>
<dbReference type="GeneID" id="815039"/>
<dbReference type="Gramene" id="AT2G04920.1">
    <property type="protein sequence ID" value="AT2G04920.1"/>
    <property type="gene ID" value="AT2G04920"/>
</dbReference>
<dbReference type="KEGG" id="ath:AT2G04920"/>
<dbReference type="Araport" id="AT2G04920"/>
<dbReference type="TAIR" id="AT2G04920"/>
<dbReference type="HOGENOM" id="CLU_034692_0_0_1"/>
<dbReference type="InParanoid" id="Q9SI34"/>
<dbReference type="OMA" id="TRWINFE"/>
<dbReference type="PhylomeDB" id="Q9SI34"/>
<dbReference type="PRO" id="PR:Q9SI34"/>
<dbReference type="Proteomes" id="UP000006548">
    <property type="component" value="Chromosome 2"/>
</dbReference>
<dbReference type="ExpressionAtlas" id="Q9SI34">
    <property type="expression patterns" value="baseline and differential"/>
</dbReference>
<dbReference type="CDD" id="cd22157">
    <property type="entry name" value="F-box_AtFBW1-like"/>
    <property type="match status" value="1"/>
</dbReference>
<dbReference type="Gene3D" id="1.20.1280.50">
    <property type="match status" value="1"/>
</dbReference>
<dbReference type="InterPro" id="IPR006527">
    <property type="entry name" value="F-box-assoc_dom_typ1"/>
</dbReference>
<dbReference type="InterPro" id="IPR017451">
    <property type="entry name" value="F-box-assoc_interact_dom"/>
</dbReference>
<dbReference type="InterPro" id="IPR036047">
    <property type="entry name" value="F-box-like_dom_sf"/>
</dbReference>
<dbReference type="InterPro" id="IPR001810">
    <property type="entry name" value="F-box_dom"/>
</dbReference>
<dbReference type="InterPro" id="IPR050796">
    <property type="entry name" value="SCF_F-box_component"/>
</dbReference>
<dbReference type="NCBIfam" id="TIGR01640">
    <property type="entry name" value="F_box_assoc_1"/>
    <property type="match status" value="1"/>
</dbReference>
<dbReference type="PANTHER" id="PTHR31672">
    <property type="entry name" value="BNACNNG10540D PROTEIN"/>
    <property type="match status" value="1"/>
</dbReference>
<dbReference type="PANTHER" id="PTHR31672:SF13">
    <property type="entry name" value="F-BOX PROTEIN CPR30-LIKE"/>
    <property type="match status" value="1"/>
</dbReference>
<dbReference type="Pfam" id="PF00646">
    <property type="entry name" value="F-box"/>
    <property type="match status" value="1"/>
</dbReference>
<dbReference type="Pfam" id="PF07734">
    <property type="entry name" value="FBA_1"/>
    <property type="match status" value="1"/>
</dbReference>
<dbReference type="SMART" id="SM00256">
    <property type="entry name" value="FBOX"/>
    <property type="match status" value="1"/>
</dbReference>
<dbReference type="SUPFAM" id="SSF81383">
    <property type="entry name" value="F-box domain"/>
    <property type="match status" value="1"/>
</dbReference>
<dbReference type="PROSITE" id="PS50181">
    <property type="entry name" value="FBOX"/>
    <property type="match status" value="1"/>
</dbReference>
<reference key="1">
    <citation type="journal article" date="1999" name="Nature">
        <title>Sequence and analysis of chromosome 2 of the plant Arabidopsis thaliana.</title>
        <authorList>
            <person name="Lin X."/>
            <person name="Kaul S."/>
            <person name="Rounsley S.D."/>
            <person name="Shea T.P."/>
            <person name="Benito M.-I."/>
            <person name="Town C.D."/>
            <person name="Fujii C.Y."/>
            <person name="Mason T.M."/>
            <person name="Bowman C.L."/>
            <person name="Barnstead M.E."/>
            <person name="Feldblyum T.V."/>
            <person name="Buell C.R."/>
            <person name="Ketchum K.A."/>
            <person name="Lee J.J."/>
            <person name="Ronning C.M."/>
            <person name="Koo H.L."/>
            <person name="Moffat K.S."/>
            <person name="Cronin L.A."/>
            <person name="Shen M."/>
            <person name="Pai G."/>
            <person name="Van Aken S."/>
            <person name="Umayam L."/>
            <person name="Tallon L.J."/>
            <person name="Gill J.E."/>
            <person name="Adams M.D."/>
            <person name="Carrera A.J."/>
            <person name="Creasy T.H."/>
            <person name="Goodman H.M."/>
            <person name="Somerville C.R."/>
            <person name="Copenhaver G.P."/>
            <person name="Preuss D."/>
            <person name="Nierman W.C."/>
            <person name="White O."/>
            <person name="Eisen J.A."/>
            <person name="Salzberg S.L."/>
            <person name="Fraser C.M."/>
            <person name="Venter J.C."/>
        </authorList>
    </citation>
    <scope>NUCLEOTIDE SEQUENCE [LARGE SCALE GENOMIC DNA]</scope>
    <source>
        <strain>cv. Columbia</strain>
    </source>
</reference>
<reference key="2">
    <citation type="journal article" date="2017" name="Plant J.">
        <title>Araport11: a complete reannotation of the Arabidopsis thaliana reference genome.</title>
        <authorList>
            <person name="Cheng C.Y."/>
            <person name="Krishnakumar V."/>
            <person name="Chan A.P."/>
            <person name="Thibaud-Nissen F."/>
            <person name="Schobel S."/>
            <person name="Town C.D."/>
        </authorList>
    </citation>
    <scope>GENOME REANNOTATION</scope>
    <source>
        <strain>cv. Columbia</strain>
    </source>
</reference>
<reference key="3">
    <citation type="journal article" date="2000" name="Trends Plant Sci.">
        <title>F-box proteins in Arabidopsis.</title>
        <authorList>
            <person name="Xiao W."/>
            <person name="Jang J.-C."/>
        </authorList>
    </citation>
    <scope>GENE FAMILY</scope>
    <scope>NOMENCLATURE</scope>
</reference>
<evidence type="ECO:0000255" key="1">
    <source>
        <dbReference type="PROSITE-ProRule" id="PRU00080"/>
    </source>
</evidence>
<sequence>MSDLPPDLVEDILSRVPATSLKRLRFTCKQWNSLFKNRRFTEKHFCKAPKQSHVLLWKDYTVCPMSINLNFSGSSIEFKSVLSLKDSHYNSEQVYIAKVFHCDGLLLCTTKDHRLLVWNPCLGETRWINFENDYKPYSRFSLGYKNNKSCRSYKILRFWTSYLTPNHIGLRYNIYEFTTDSWRVLIDKVSLNYFLIESENGVSFKGNTYWLALDEETNFLLGFDFTMERFKRLCLPSNKNCDTMVLSVVREEKLSVSHQNFCSSKMDIWMTNRIDSETAMSWKRYFSVEFKILSMCHSLPFCNSFLIDEEKKIVISTVRGNENMVNIIGAYNAYYAEVPVESTNWPCSPYFVSYVPSLVQIQQCKSKENNKTSLEM</sequence>
<accession>Q9SI34</accession>
<name>FBX9_ARATH</name>
<keyword id="KW-1185">Reference proteome</keyword>